<gene>
    <name evidence="7 9" type="primary">ZNG1E</name>
    <name evidence="9" type="synonym">CBWD5</name>
</gene>
<evidence type="ECO:0000250" key="1">
    <source>
        <dbReference type="UniProtKB" id="Q8VEH6"/>
    </source>
</evidence>
<evidence type="ECO:0000255" key="2"/>
<evidence type="ECO:0000256" key="3">
    <source>
        <dbReference type="SAM" id="MobiDB-lite"/>
    </source>
</evidence>
<evidence type="ECO:0000269" key="4">
    <source>
    </source>
</evidence>
<evidence type="ECO:0000303" key="5">
    <source>
    </source>
</evidence>
<evidence type="ECO:0000303" key="6">
    <source>
    </source>
</evidence>
<evidence type="ECO:0000303" key="7">
    <source>
    </source>
</evidence>
<evidence type="ECO:0000305" key="8"/>
<evidence type="ECO:0000312" key="9">
    <source>
        <dbReference type="HGNC" id="HGNC:24584"/>
    </source>
</evidence>
<accession>Q5RIA9</accession>
<accession>Q8N7U8</accession>
<sequence>MLPAVGSVDEEEDPAEEDCPELVPIETTQSEEEEKSGLGAKIPVTIITGYLGAGKTTLLNYILTEQHSKRVAVILNESGEGSALEKSLAVSQGGELYEEWLELRNGCLCCSVKDNGLRAIENLMQKKGKFDDILLETTGLADPGAVTSMFWVDAELGSDIYLDGIITIVDSKYGLKHLTEEKPDGLINEATRQVALADIILINKTDLVPEEDVKKLRTTIRSINGLGQILETQRSRVDLSNVLDLHAFDSLSGISLQKKLQHVPGTQPHLDQSIVTITFEVPGNAKEEHLNMFIQNLLWEKNVRNKDNHCMEVIRLKGLVSIKDKSQQVIVQGVHELYDLEETPVSWKDDTERTNRLVLIGRNLDKDILKQLFIATVTETEKQWTTHFKEDQVCT</sequence>
<name>ZNG1E_HUMAN</name>
<feature type="chain" id="PRO_0000317239" description="Zinc-regulated GTPase metalloprotein activator 1E">
    <location>
        <begin position="1"/>
        <end position="395"/>
    </location>
</feature>
<feature type="domain" description="CobW C-terminal">
    <location>
        <begin position="274"/>
        <end position="377"/>
    </location>
</feature>
<feature type="region of interest" description="Disordered" evidence="3">
    <location>
        <begin position="1"/>
        <end position="22"/>
    </location>
</feature>
<feature type="short sequence motif" description="psi-PxLVp motif" evidence="1">
    <location>
        <begin position="17"/>
        <end position="24"/>
    </location>
</feature>
<feature type="short sequence motif" description="CXCC motif" evidence="2">
    <location>
        <begin position="107"/>
        <end position="110"/>
    </location>
</feature>
<feature type="compositionally biased region" description="Acidic residues" evidence="3">
    <location>
        <begin position="8"/>
        <end position="20"/>
    </location>
</feature>
<feature type="binding site" evidence="2">
    <location>
        <begin position="49"/>
        <end position="56"/>
    </location>
    <ligand>
        <name>GTP</name>
        <dbReference type="ChEBI" id="CHEBI:37565"/>
    </ligand>
</feature>
<feature type="binding site" evidence="1">
    <location>
        <position position="107"/>
    </location>
    <ligand>
        <name>Zn(2+)</name>
        <dbReference type="ChEBI" id="CHEBI:29105"/>
    </ligand>
</feature>
<feature type="binding site" evidence="1">
    <location>
        <position position="109"/>
    </location>
    <ligand>
        <name>Zn(2+)</name>
        <dbReference type="ChEBI" id="CHEBI:29105"/>
    </ligand>
</feature>
<feature type="binding site" evidence="2">
    <location>
        <begin position="110"/>
        <end position="114"/>
    </location>
    <ligand>
        <name>GTP</name>
        <dbReference type="ChEBI" id="CHEBI:37565"/>
    </ligand>
</feature>
<feature type="binding site" evidence="1">
    <location>
        <position position="110"/>
    </location>
    <ligand>
        <name>Zn(2+)</name>
        <dbReference type="ChEBI" id="CHEBI:29105"/>
    </ligand>
</feature>
<feature type="binding site" evidence="2">
    <location>
        <begin position="203"/>
        <end position="206"/>
    </location>
    <ligand>
        <name>GTP</name>
        <dbReference type="ChEBI" id="CHEBI:37565"/>
    </ligand>
</feature>
<feature type="splice variant" id="VSP_033808" description="In isoform 2." evidence="5">
    <location>
        <begin position="1"/>
        <end position="291"/>
    </location>
</feature>
<feature type="splice variant" id="VSP_040475" description="In isoform 3." evidence="6">
    <location>
        <begin position="192"/>
        <end position="220"/>
    </location>
</feature>
<feature type="splice variant" id="VSP_040476" description="In isoform 3." evidence="6">
    <location>
        <begin position="236"/>
        <end position="254"/>
    </location>
</feature>
<feature type="sequence variant" id="VAR_067710" description="In dbSNP:rs1411096827." evidence="4">
    <original>T</original>
    <variation>A</variation>
    <location>
        <position position="147"/>
    </location>
</feature>
<feature type="sequence variant" id="VAR_067711" description="In dbSNP:rs1168844980.">
    <original>E</original>
    <variation>D</variation>
    <location>
        <position position="288"/>
    </location>
</feature>
<feature type="sequence conflict" description="In Ref. 3; BC082271." evidence="8" ref="3">
    <original>D</original>
    <variation>Y</variation>
    <location>
        <position position="132"/>
    </location>
</feature>
<protein>
    <recommendedName>
        <fullName evidence="7">Zinc-regulated GTPase metalloprotein activator 1E</fullName>
        <ecNumber evidence="1">3.6.5.-</ecNumber>
    </recommendedName>
    <alternativeName>
        <fullName evidence="8">Cobalamin synthase W domain-containing protein 5</fullName>
        <shortName evidence="8">COBW domain-containing protein 5</shortName>
    </alternativeName>
</protein>
<keyword id="KW-0025">Alternative splicing</keyword>
<keyword id="KW-0143">Chaperone</keyword>
<keyword id="KW-0342">GTP-binding</keyword>
<keyword id="KW-0378">Hydrolase</keyword>
<keyword id="KW-0479">Metal-binding</keyword>
<keyword id="KW-0547">Nucleotide-binding</keyword>
<keyword id="KW-0539">Nucleus</keyword>
<keyword id="KW-1185">Reference proteome</keyword>
<keyword id="KW-0862">Zinc</keyword>
<comment type="function">
    <text evidence="1">Zinc chaperone that directly transfers zinc cofactor to target metalloproteins, thereby activating them. Catalyzes zinc insertion into the active site of methionine aminopeptidase METAP1, which function to cleave the initiator methionine from polypeptides during or after protein translation. Mechanistically, the N-terminal psi-PxLVp motif binds to the C6H2-type zinc finger of inactive form of METAP1. After formation of the docked complex, zinc is transferred from the CXCC motif in the GTPase domain of ZNG1E to the zinc binding site in the peptidase domain of METAP1 in a process requiring GTP hydrolysis. GTP/GDP exchange is required for release of active METAP1.</text>
</comment>
<comment type="catalytic activity">
    <reaction evidence="1">
        <text>GTP + H2O = GDP + phosphate + H(+)</text>
        <dbReference type="Rhea" id="RHEA:19669"/>
        <dbReference type="ChEBI" id="CHEBI:15377"/>
        <dbReference type="ChEBI" id="CHEBI:15378"/>
        <dbReference type="ChEBI" id="CHEBI:37565"/>
        <dbReference type="ChEBI" id="CHEBI:43474"/>
        <dbReference type="ChEBI" id="CHEBI:58189"/>
    </reaction>
    <physiologicalReaction direction="left-to-right" evidence="1">
        <dbReference type="Rhea" id="RHEA:19670"/>
    </physiologicalReaction>
</comment>
<comment type="subcellular location">
    <subcellularLocation>
        <location evidence="1">Nucleus</location>
    </subcellularLocation>
</comment>
<comment type="alternative products">
    <event type="alternative splicing"/>
    <isoform>
        <id>Q5RIA9-1</id>
        <name>1</name>
        <sequence type="displayed"/>
    </isoform>
    <isoform>
        <id>Q5RIA9-2</id>
        <name>2</name>
        <sequence type="described" ref="VSP_033808"/>
    </isoform>
    <isoform>
        <id>Q5RIA9-3</id>
        <name>3</name>
        <sequence type="described" ref="VSP_040475 VSP_040476"/>
    </isoform>
</comment>
<comment type="similarity">
    <text evidence="8">Belongs to the SIMIBI class G3E GTPase family. ZNG1 subfamily.</text>
</comment>
<proteinExistence type="evidence at transcript level"/>
<dbReference type="EC" id="3.6.5.-" evidence="1"/>
<dbReference type="EMBL" id="AK097639">
    <property type="status" value="NOT_ANNOTATED_CDS"/>
    <property type="molecule type" value="mRNA"/>
</dbReference>
<dbReference type="EMBL" id="BX284632">
    <property type="status" value="NOT_ANNOTATED_CDS"/>
    <property type="molecule type" value="Genomic_DNA"/>
</dbReference>
<dbReference type="EMBL" id="BC082271">
    <property type="status" value="NOT_ANNOTATED_CDS"/>
    <property type="molecule type" value="mRNA"/>
</dbReference>
<dbReference type="CCDS" id="CCDS75841.1">
    <molecule id="Q5RIA9-3"/>
</dbReference>
<dbReference type="CCDS" id="CCDS83367.1">
    <molecule id="Q5RIA9-1"/>
</dbReference>
<dbReference type="RefSeq" id="NP_001020087.2">
    <molecule id="Q5RIA9-3"/>
    <property type="nucleotide sequence ID" value="NM_001024916.4"/>
</dbReference>
<dbReference type="RefSeq" id="NP_001317597.1">
    <molecule id="Q5RIA9-1"/>
    <property type="nucleotide sequence ID" value="NM_001330668.2"/>
</dbReference>
<dbReference type="SMR" id="Q5RIA9"/>
<dbReference type="BioGRID" id="128658">
    <property type="interactions" value="13"/>
</dbReference>
<dbReference type="FunCoup" id="Q5RIA9">
    <property type="interactions" value="2089"/>
</dbReference>
<dbReference type="IntAct" id="Q5RIA9">
    <property type="interactions" value="4"/>
</dbReference>
<dbReference type="STRING" id="9606.ENSP00000371842"/>
<dbReference type="iPTMnet" id="Q5RIA9"/>
<dbReference type="PhosphoSitePlus" id="Q5RIA9"/>
<dbReference type="BioMuta" id="CBWD5"/>
<dbReference type="DMDM" id="74743388"/>
<dbReference type="jPOST" id="Q5RIA9"/>
<dbReference type="MassIVE" id="Q5RIA9"/>
<dbReference type="PeptideAtlas" id="Q5RIA9"/>
<dbReference type="Pumba" id="Q5RIA9"/>
<dbReference type="Antibodypedia" id="54586">
    <property type="antibodies" value="13 antibodies from 2 providers"/>
</dbReference>
<dbReference type="DNASU" id="220869"/>
<dbReference type="Ensembl" id="ENST00000377395.8">
    <molecule id="Q5RIA9-3"/>
    <property type="protein sequence ID" value="ENSP00000366612.4"/>
    <property type="gene ID" value="ENSG00000147996.17"/>
</dbReference>
<dbReference type="Ensembl" id="ENST00000382405.8">
    <molecule id="Q5RIA9-1"/>
    <property type="protein sequence ID" value="ENSP00000371842.3"/>
    <property type="gene ID" value="ENSG00000147996.17"/>
</dbReference>
<dbReference type="GeneID" id="220869"/>
<dbReference type="KEGG" id="hsa:220869"/>
<dbReference type="MANE-Select" id="ENST00000382405.8">
    <property type="protein sequence ID" value="ENSP00000371842.3"/>
    <property type="RefSeq nucleotide sequence ID" value="NM_001330668.2"/>
    <property type="RefSeq protein sequence ID" value="NP_001317597.1"/>
</dbReference>
<dbReference type="UCSC" id="uc004aga.6">
    <molecule id="Q5RIA9-1"/>
    <property type="organism name" value="human"/>
</dbReference>
<dbReference type="AGR" id="HGNC:24584"/>
<dbReference type="CTD" id="220869"/>
<dbReference type="GeneCards" id="ZNG1E"/>
<dbReference type="HGNC" id="HGNC:24584">
    <property type="gene designation" value="ZNG1E"/>
</dbReference>
<dbReference type="HPA" id="ENSG00000147996">
    <property type="expression patterns" value="Low tissue specificity"/>
</dbReference>
<dbReference type="neXtProt" id="NX_Q5RIA9"/>
<dbReference type="OpenTargets" id="ENSG00000147996"/>
<dbReference type="VEuPathDB" id="HostDB:ENSG00000147996"/>
<dbReference type="GeneTree" id="ENSGT00640000091523"/>
<dbReference type="HOGENOM" id="CLU_017452_0_1_1"/>
<dbReference type="InParanoid" id="Q5RIA9"/>
<dbReference type="OMA" id="GHSHMDP"/>
<dbReference type="OrthoDB" id="258627at2759"/>
<dbReference type="PAN-GO" id="Q5RIA9">
    <property type="GO annotations" value="1 GO annotation based on evolutionary models"/>
</dbReference>
<dbReference type="PhylomeDB" id="Q5RIA9"/>
<dbReference type="TreeFam" id="TF332679"/>
<dbReference type="PathwayCommons" id="Q5RIA9"/>
<dbReference type="SignaLink" id="Q5RIA9"/>
<dbReference type="BioGRID-ORCS" id="220869">
    <property type="hits" value="265 hits in 671 CRISPR screens"/>
</dbReference>
<dbReference type="ChiTaRS" id="CBWD5">
    <property type="organism name" value="human"/>
</dbReference>
<dbReference type="GenomeRNAi" id="220869"/>
<dbReference type="Pharos" id="Q5RIA9">
    <property type="development level" value="Tdark"/>
</dbReference>
<dbReference type="PRO" id="PR:Q5RIA9"/>
<dbReference type="Proteomes" id="UP000005640">
    <property type="component" value="Chromosome 9"/>
</dbReference>
<dbReference type="RNAct" id="Q5RIA9">
    <property type="molecule type" value="protein"/>
</dbReference>
<dbReference type="Bgee" id="ENSG00000147996">
    <property type="expression patterns" value="Expressed in cerebellar hemisphere and 94 other cell types or tissues"/>
</dbReference>
<dbReference type="ExpressionAtlas" id="Q5RIA9">
    <property type="expression patterns" value="baseline and differential"/>
</dbReference>
<dbReference type="GO" id="GO:0005737">
    <property type="term" value="C:cytoplasm"/>
    <property type="evidence" value="ECO:0000318"/>
    <property type="project" value="GO_Central"/>
</dbReference>
<dbReference type="GO" id="GO:0005634">
    <property type="term" value="C:nucleus"/>
    <property type="evidence" value="ECO:0000250"/>
    <property type="project" value="UniProtKB"/>
</dbReference>
<dbReference type="GO" id="GO:0005525">
    <property type="term" value="F:GTP binding"/>
    <property type="evidence" value="ECO:0007669"/>
    <property type="project" value="UniProtKB-KW"/>
</dbReference>
<dbReference type="GO" id="GO:0003924">
    <property type="term" value="F:GTPase activity"/>
    <property type="evidence" value="ECO:0000250"/>
    <property type="project" value="UniProt"/>
</dbReference>
<dbReference type="GO" id="GO:0046872">
    <property type="term" value="F:metal ion binding"/>
    <property type="evidence" value="ECO:0007669"/>
    <property type="project" value="UniProtKB-KW"/>
</dbReference>
<dbReference type="GO" id="GO:0140827">
    <property type="term" value="F:zinc chaperone activity"/>
    <property type="evidence" value="ECO:0000250"/>
    <property type="project" value="UniProt"/>
</dbReference>
<dbReference type="GO" id="GO:0051604">
    <property type="term" value="P:protein maturation"/>
    <property type="evidence" value="ECO:0000250"/>
    <property type="project" value="UniProt"/>
</dbReference>
<dbReference type="CDD" id="cd03112">
    <property type="entry name" value="CobW-like"/>
    <property type="match status" value="1"/>
</dbReference>
<dbReference type="Gene3D" id="3.30.1220.10">
    <property type="entry name" value="CobW-like, C-terminal domain"/>
    <property type="match status" value="1"/>
</dbReference>
<dbReference type="Gene3D" id="3.40.50.300">
    <property type="entry name" value="P-loop containing nucleotide triphosphate hydrolases"/>
    <property type="match status" value="1"/>
</dbReference>
<dbReference type="InterPro" id="IPR036627">
    <property type="entry name" value="CobW-likC_sf"/>
</dbReference>
<dbReference type="InterPro" id="IPR011629">
    <property type="entry name" value="CobW-like_C"/>
</dbReference>
<dbReference type="InterPro" id="IPR003495">
    <property type="entry name" value="CobW/HypB/UreG_nucleotide-bd"/>
</dbReference>
<dbReference type="InterPro" id="IPR027417">
    <property type="entry name" value="P-loop_NTPase"/>
</dbReference>
<dbReference type="InterPro" id="IPR051316">
    <property type="entry name" value="Zinc-reg_GTPase_activator"/>
</dbReference>
<dbReference type="PANTHER" id="PTHR13748">
    <property type="entry name" value="COBW-RELATED"/>
    <property type="match status" value="1"/>
</dbReference>
<dbReference type="PANTHER" id="PTHR13748:SF31">
    <property type="entry name" value="ZINC-REGULATED GTPASE METALLOPROTEIN ACTIVATOR 1A-RELATED"/>
    <property type="match status" value="1"/>
</dbReference>
<dbReference type="Pfam" id="PF02492">
    <property type="entry name" value="cobW"/>
    <property type="match status" value="1"/>
</dbReference>
<dbReference type="Pfam" id="PF07683">
    <property type="entry name" value="CobW_C"/>
    <property type="match status" value="1"/>
</dbReference>
<dbReference type="SMART" id="SM00833">
    <property type="entry name" value="CobW_C"/>
    <property type="match status" value="1"/>
</dbReference>
<dbReference type="SUPFAM" id="SSF90002">
    <property type="entry name" value="Hypothetical protein YjiA, C-terminal domain"/>
    <property type="match status" value="1"/>
</dbReference>
<dbReference type="SUPFAM" id="SSF52540">
    <property type="entry name" value="P-loop containing nucleoside triphosphate hydrolases"/>
    <property type="match status" value="1"/>
</dbReference>
<organism>
    <name type="scientific">Homo sapiens</name>
    <name type="common">Human</name>
    <dbReference type="NCBI Taxonomy" id="9606"/>
    <lineage>
        <taxon>Eukaryota</taxon>
        <taxon>Metazoa</taxon>
        <taxon>Chordata</taxon>
        <taxon>Craniata</taxon>
        <taxon>Vertebrata</taxon>
        <taxon>Euteleostomi</taxon>
        <taxon>Mammalia</taxon>
        <taxon>Eutheria</taxon>
        <taxon>Euarchontoglires</taxon>
        <taxon>Primates</taxon>
        <taxon>Haplorrhini</taxon>
        <taxon>Catarrhini</taxon>
        <taxon>Hominidae</taxon>
        <taxon>Homo</taxon>
    </lineage>
</organism>
<reference key="1">
    <citation type="journal article" date="2004" name="Nat. Genet.">
        <title>Complete sequencing and characterization of 21,243 full-length human cDNAs.</title>
        <authorList>
            <person name="Ota T."/>
            <person name="Suzuki Y."/>
            <person name="Nishikawa T."/>
            <person name="Otsuki T."/>
            <person name="Sugiyama T."/>
            <person name="Irie R."/>
            <person name="Wakamatsu A."/>
            <person name="Hayashi K."/>
            <person name="Sato H."/>
            <person name="Nagai K."/>
            <person name="Kimura K."/>
            <person name="Makita H."/>
            <person name="Sekine M."/>
            <person name="Obayashi M."/>
            <person name="Nishi T."/>
            <person name="Shibahara T."/>
            <person name="Tanaka T."/>
            <person name="Ishii S."/>
            <person name="Yamamoto J."/>
            <person name="Saito K."/>
            <person name="Kawai Y."/>
            <person name="Isono Y."/>
            <person name="Nakamura Y."/>
            <person name="Nagahari K."/>
            <person name="Murakami K."/>
            <person name="Yasuda T."/>
            <person name="Iwayanagi T."/>
            <person name="Wagatsuma M."/>
            <person name="Shiratori A."/>
            <person name="Sudo H."/>
            <person name="Hosoiri T."/>
            <person name="Kaku Y."/>
            <person name="Kodaira H."/>
            <person name="Kondo H."/>
            <person name="Sugawara M."/>
            <person name="Takahashi M."/>
            <person name="Kanda K."/>
            <person name="Yokoi T."/>
            <person name="Furuya T."/>
            <person name="Kikkawa E."/>
            <person name="Omura Y."/>
            <person name="Abe K."/>
            <person name="Kamihara K."/>
            <person name="Katsuta N."/>
            <person name="Sato K."/>
            <person name="Tanikawa M."/>
            <person name="Yamazaki M."/>
            <person name="Ninomiya K."/>
            <person name="Ishibashi T."/>
            <person name="Yamashita H."/>
            <person name="Murakawa K."/>
            <person name="Fujimori K."/>
            <person name="Tanai H."/>
            <person name="Kimata M."/>
            <person name="Watanabe M."/>
            <person name="Hiraoka S."/>
            <person name="Chiba Y."/>
            <person name="Ishida S."/>
            <person name="Ono Y."/>
            <person name="Takiguchi S."/>
            <person name="Watanabe S."/>
            <person name="Yosida M."/>
            <person name="Hotuta T."/>
            <person name="Kusano J."/>
            <person name="Kanehori K."/>
            <person name="Takahashi-Fujii A."/>
            <person name="Hara H."/>
            <person name="Tanase T.-O."/>
            <person name="Nomura Y."/>
            <person name="Togiya S."/>
            <person name="Komai F."/>
            <person name="Hara R."/>
            <person name="Takeuchi K."/>
            <person name="Arita M."/>
            <person name="Imose N."/>
            <person name="Musashino K."/>
            <person name="Yuuki H."/>
            <person name="Oshima A."/>
            <person name="Sasaki N."/>
            <person name="Aotsuka S."/>
            <person name="Yoshikawa Y."/>
            <person name="Matsunawa H."/>
            <person name="Ichihara T."/>
            <person name="Shiohata N."/>
            <person name="Sano S."/>
            <person name="Moriya S."/>
            <person name="Momiyama H."/>
            <person name="Satoh N."/>
            <person name="Takami S."/>
            <person name="Terashima Y."/>
            <person name="Suzuki O."/>
            <person name="Nakagawa S."/>
            <person name="Senoh A."/>
            <person name="Mizoguchi H."/>
            <person name="Goto Y."/>
            <person name="Shimizu F."/>
            <person name="Wakebe H."/>
            <person name="Hishigaki H."/>
            <person name="Watanabe T."/>
            <person name="Sugiyama A."/>
            <person name="Takemoto M."/>
            <person name="Kawakami B."/>
            <person name="Yamazaki M."/>
            <person name="Watanabe K."/>
            <person name="Kumagai A."/>
            <person name="Itakura S."/>
            <person name="Fukuzumi Y."/>
            <person name="Fujimori Y."/>
            <person name="Komiyama M."/>
            <person name="Tashiro H."/>
            <person name="Tanigami A."/>
            <person name="Fujiwara T."/>
            <person name="Ono T."/>
            <person name="Yamada K."/>
            <person name="Fujii Y."/>
            <person name="Ozaki K."/>
            <person name="Hirao M."/>
            <person name="Ohmori Y."/>
            <person name="Kawabata A."/>
            <person name="Hikiji T."/>
            <person name="Kobatake N."/>
            <person name="Inagaki H."/>
            <person name="Ikema Y."/>
            <person name="Okamoto S."/>
            <person name="Okitani R."/>
            <person name="Kawakami T."/>
            <person name="Noguchi S."/>
            <person name="Itoh T."/>
            <person name="Shigeta K."/>
            <person name="Senba T."/>
            <person name="Matsumura K."/>
            <person name="Nakajima Y."/>
            <person name="Mizuno T."/>
            <person name="Morinaga M."/>
            <person name="Sasaki M."/>
            <person name="Togashi T."/>
            <person name="Oyama M."/>
            <person name="Hata H."/>
            <person name="Watanabe M."/>
            <person name="Komatsu T."/>
            <person name="Mizushima-Sugano J."/>
            <person name="Satoh T."/>
            <person name="Shirai Y."/>
            <person name="Takahashi Y."/>
            <person name="Nakagawa K."/>
            <person name="Okumura K."/>
            <person name="Nagase T."/>
            <person name="Nomura N."/>
            <person name="Kikuchi H."/>
            <person name="Masuho Y."/>
            <person name="Yamashita R."/>
            <person name="Nakai K."/>
            <person name="Yada T."/>
            <person name="Nakamura Y."/>
            <person name="Ohara O."/>
            <person name="Isogai T."/>
            <person name="Sugano S."/>
        </authorList>
    </citation>
    <scope>NUCLEOTIDE SEQUENCE [LARGE SCALE MRNA] (ISOFORM 2)</scope>
    <source>
        <tissue>Testis</tissue>
    </source>
</reference>
<reference key="2">
    <citation type="journal article" date="2004" name="Nature">
        <title>DNA sequence and analysis of human chromosome 9.</title>
        <authorList>
            <person name="Humphray S.J."/>
            <person name="Oliver K."/>
            <person name="Hunt A.R."/>
            <person name="Plumb R.W."/>
            <person name="Loveland J.E."/>
            <person name="Howe K.L."/>
            <person name="Andrews T.D."/>
            <person name="Searle S."/>
            <person name="Hunt S.E."/>
            <person name="Scott C.E."/>
            <person name="Jones M.C."/>
            <person name="Ainscough R."/>
            <person name="Almeida J.P."/>
            <person name="Ambrose K.D."/>
            <person name="Ashwell R.I.S."/>
            <person name="Babbage A.K."/>
            <person name="Babbage S."/>
            <person name="Bagguley C.L."/>
            <person name="Bailey J."/>
            <person name="Banerjee R."/>
            <person name="Barker D.J."/>
            <person name="Barlow K.F."/>
            <person name="Bates K."/>
            <person name="Beasley H."/>
            <person name="Beasley O."/>
            <person name="Bird C.P."/>
            <person name="Bray-Allen S."/>
            <person name="Brown A.J."/>
            <person name="Brown J.Y."/>
            <person name="Burford D."/>
            <person name="Burrill W."/>
            <person name="Burton J."/>
            <person name="Carder C."/>
            <person name="Carter N.P."/>
            <person name="Chapman J.C."/>
            <person name="Chen Y."/>
            <person name="Clarke G."/>
            <person name="Clark S.Y."/>
            <person name="Clee C.M."/>
            <person name="Clegg S."/>
            <person name="Collier R.E."/>
            <person name="Corby N."/>
            <person name="Crosier M."/>
            <person name="Cummings A.T."/>
            <person name="Davies J."/>
            <person name="Dhami P."/>
            <person name="Dunn M."/>
            <person name="Dutta I."/>
            <person name="Dyer L.W."/>
            <person name="Earthrowl M.E."/>
            <person name="Faulkner L."/>
            <person name="Fleming C.J."/>
            <person name="Frankish A."/>
            <person name="Frankland J.A."/>
            <person name="French L."/>
            <person name="Fricker D.G."/>
            <person name="Garner P."/>
            <person name="Garnett J."/>
            <person name="Ghori J."/>
            <person name="Gilbert J.G.R."/>
            <person name="Glison C."/>
            <person name="Grafham D.V."/>
            <person name="Gribble S."/>
            <person name="Griffiths C."/>
            <person name="Griffiths-Jones S."/>
            <person name="Grocock R."/>
            <person name="Guy J."/>
            <person name="Hall R.E."/>
            <person name="Hammond S."/>
            <person name="Harley J.L."/>
            <person name="Harrison E.S.I."/>
            <person name="Hart E.A."/>
            <person name="Heath P.D."/>
            <person name="Henderson C.D."/>
            <person name="Hopkins B.L."/>
            <person name="Howard P.J."/>
            <person name="Howden P.J."/>
            <person name="Huckle E."/>
            <person name="Johnson C."/>
            <person name="Johnson D."/>
            <person name="Joy A.A."/>
            <person name="Kay M."/>
            <person name="Keenan S."/>
            <person name="Kershaw J.K."/>
            <person name="Kimberley A.M."/>
            <person name="King A."/>
            <person name="Knights A."/>
            <person name="Laird G.K."/>
            <person name="Langford C."/>
            <person name="Lawlor S."/>
            <person name="Leongamornlert D.A."/>
            <person name="Leversha M."/>
            <person name="Lloyd C."/>
            <person name="Lloyd D.M."/>
            <person name="Lovell J."/>
            <person name="Martin S."/>
            <person name="Mashreghi-Mohammadi M."/>
            <person name="Matthews L."/>
            <person name="McLaren S."/>
            <person name="McLay K.E."/>
            <person name="McMurray A."/>
            <person name="Milne S."/>
            <person name="Nickerson T."/>
            <person name="Nisbett J."/>
            <person name="Nordsiek G."/>
            <person name="Pearce A.V."/>
            <person name="Peck A.I."/>
            <person name="Porter K.M."/>
            <person name="Pandian R."/>
            <person name="Pelan S."/>
            <person name="Phillimore B."/>
            <person name="Povey S."/>
            <person name="Ramsey Y."/>
            <person name="Rand V."/>
            <person name="Scharfe M."/>
            <person name="Sehra H.K."/>
            <person name="Shownkeen R."/>
            <person name="Sims S.K."/>
            <person name="Skuce C.D."/>
            <person name="Smith M."/>
            <person name="Steward C.A."/>
            <person name="Swarbreck D."/>
            <person name="Sycamore N."/>
            <person name="Tester J."/>
            <person name="Thorpe A."/>
            <person name="Tracey A."/>
            <person name="Tromans A."/>
            <person name="Thomas D.W."/>
            <person name="Wall M."/>
            <person name="Wallis J.M."/>
            <person name="West A.P."/>
            <person name="Whitehead S.L."/>
            <person name="Willey D.L."/>
            <person name="Williams S.A."/>
            <person name="Wilming L."/>
            <person name="Wray P.W."/>
            <person name="Young L."/>
            <person name="Ashurst J.L."/>
            <person name="Coulson A."/>
            <person name="Blocker H."/>
            <person name="Durbin R.M."/>
            <person name="Sulston J.E."/>
            <person name="Hubbard T."/>
            <person name="Jackson M.J."/>
            <person name="Bentley D.R."/>
            <person name="Beck S."/>
            <person name="Rogers J."/>
            <person name="Dunham I."/>
        </authorList>
    </citation>
    <scope>NUCLEOTIDE SEQUENCE [LARGE SCALE GENOMIC DNA]</scope>
</reference>
<reference key="3">
    <citation type="journal article" date="2004" name="Genome Res.">
        <title>The status, quality, and expansion of the NIH full-length cDNA project: the Mammalian Gene Collection (MGC).</title>
        <authorList>
            <consortium name="The MGC Project Team"/>
        </authorList>
    </citation>
    <scope>NUCLEOTIDE SEQUENCE [LARGE SCALE MRNA] (ISOFORM 3)</scope>
    <scope>VARIANT ALA-147</scope>
</reference>
<reference key="4">
    <citation type="journal article" date="2022" name="Cell">
        <title>Zn-regulated GTPase metalloprotein activator 1 modulates vertebrate zinc homeostasis.</title>
        <authorList>
            <person name="Weiss A."/>
            <person name="Murdoch C.C."/>
            <person name="Edmonds K.A."/>
            <person name="Jordan M.R."/>
            <person name="Monteith A.J."/>
            <person name="Perera Y.R."/>
            <person name="Rodriguez Nassif A.M."/>
            <person name="Petoletti A.M."/>
            <person name="Beavers W.N."/>
            <person name="Munneke M.J."/>
            <person name="Drury S.L."/>
            <person name="Krystofiak E.S."/>
            <person name="Thalluri K."/>
            <person name="Wu H."/>
            <person name="Kruse A.R.S."/>
            <person name="DiMarchi R.D."/>
            <person name="Caprioli R.M."/>
            <person name="Spraggins J.M."/>
            <person name="Chazin W.J."/>
            <person name="Giedroc D.P."/>
            <person name="Skaar E.P."/>
        </authorList>
    </citation>
    <scope>NOMENCLATURE</scope>
</reference>